<feature type="chain" id="PRO_0000153876" description="Probable non-specific lipid-transfer protein">
    <location>
        <begin position="1"/>
        <end position="36" status="greater than"/>
    </location>
</feature>
<feature type="unsure residue">
    <location>
        <position position="32"/>
    </location>
</feature>
<feature type="unsure residue">
    <location>
        <position position="34"/>
    </location>
</feature>
<feature type="non-terminal residue">
    <location>
        <position position="36"/>
    </location>
</feature>
<proteinExistence type="evidence at protein level"/>
<organism>
    <name type="scientific">Pinus pinea</name>
    <name type="common">Italian stone pine</name>
    <dbReference type="NCBI Taxonomy" id="3346"/>
    <lineage>
        <taxon>Eukaryota</taxon>
        <taxon>Viridiplantae</taxon>
        <taxon>Streptophyta</taxon>
        <taxon>Embryophyta</taxon>
        <taxon>Tracheophyta</taxon>
        <taxon>Spermatophyta</taxon>
        <taxon>Pinopsida</taxon>
        <taxon>Pinidae</taxon>
        <taxon>Conifers I</taxon>
        <taxon>Pinales</taxon>
        <taxon>Pinaceae</taxon>
        <taxon>Pinus</taxon>
        <taxon>Pinus subgen. Pinus</taxon>
    </lineage>
</organism>
<name>NLTP_PINPI</name>
<comment type="function">
    <text>Plant non-specific lipid-transfer proteins transfer phospholipids as well as galactolipids across membranes. May play a role in wax or cutin deposition in the cell walls of expanding epidermal cells and certain secretory tissues.</text>
</comment>
<comment type="PTM">
    <text evidence="1">Phosphorylated by Ca(2+)-dependent protein kinase.</text>
</comment>
<comment type="similarity">
    <text evidence="1">Belongs to the plant LTP family.</text>
</comment>
<reference key="1">
    <citation type="journal article" date="1992" name="Biochim. Biophys. Acta">
        <title>Purification and characterization of wheat and pine small basic protein substrates for plant calcium-dependent protein kinase.</title>
        <authorList>
            <person name="Polya G.M."/>
            <person name="Chandra S."/>
            <person name="Chung R."/>
            <person name="Neumann G.M."/>
            <person name="Hoej P.B."/>
        </authorList>
    </citation>
    <scope>PROTEIN SEQUENCE</scope>
    <source>
        <tissue>Seed</tissue>
    </source>
</reference>
<evidence type="ECO:0000305" key="1"/>
<dbReference type="PIR" id="S22222">
    <property type="entry name" value="S22222"/>
</dbReference>
<dbReference type="SMR" id="P26912"/>
<dbReference type="GO" id="GO:0008289">
    <property type="term" value="F:lipid binding"/>
    <property type="evidence" value="ECO:0007669"/>
    <property type="project" value="UniProtKB-KW"/>
</dbReference>
<dbReference type="Gene3D" id="1.10.110.10">
    <property type="entry name" value="Plant lipid-transfer and hydrophobic proteins"/>
    <property type="match status" value="1"/>
</dbReference>
<dbReference type="InterPro" id="IPR036312">
    <property type="entry name" value="Bifun_inhib/LTP/seed_sf"/>
</dbReference>
<dbReference type="SUPFAM" id="SSF47699">
    <property type="entry name" value="Bifunctional inhibitor/lipid-transfer protein/seed storage 2S albumin"/>
    <property type="match status" value="1"/>
</dbReference>
<protein>
    <recommendedName>
        <fullName>Probable non-specific lipid-transfer protein</fullName>
        <shortName>Basic protein</shortName>
        <shortName>LTP</shortName>
        <shortName>PBP</shortName>
    </recommendedName>
</protein>
<sequence>AVDCNTVKSDLVGCVGYLPSGTGNPTPQCCDGVVKL</sequence>
<keyword id="KW-0903">Direct protein sequencing</keyword>
<keyword id="KW-0446">Lipid-binding</keyword>
<keyword id="KW-0597">Phosphoprotein</keyword>
<keyword id="KW-0813">Transport</keyword>
<accession>P26912</accession>